<organism>
    <name type="scientific">Staphylococcus haemolyticus (strain JCSC1435)</name>
    <dbReference type="NCBI Taxonomy" id="279808"/>
    <lineage>
        <taxon>Bacteria</taxon>
        <taxon>Bacillati</taxon>
        <taxon>Bacillota</taxon>
        <taxon>Bacilli</taxon>
        <taxon>Bacillales</taxon>
        <taxon>Staphylococcaceae</taxon>
        <taxon>Staphylococcus</taxon>
    </lineage>
</organism>
<protein>
    <recommendedName>
        <fullName>Putative dipeptidase SH1171</fullName>
        <ecNumber>3.4.13.-</ecNumber>
    </recommendedName>
</protein>
<proteinExistence type="inferred from homology"/>
<accession>Q4L795</accession>
<gene>
    <name type="ordered locus">SH1171</name>
</gene>
<comment type="cofactor">
    <cofactor evidence="1">
        <name>Zn(2+)</name>
        <dbReference type="ChEBI" id="CHEBI:29105"/>
    </cofactor>
    <text evidence="1">Binds 2 Zn(2+) ions per subunit.</text>
</comment>
<comment type="similarity">
    <text evidence="2">Belongs to the peptidase M20A family.</text>
</comment>
<name>PEPVL_STAHJ</name>
<dbReference type="EC" id="3.4.13.-"/>
<dbReference type="EMBL" id="AP006716">
    <property type="protein sequence ID" value="BAE04480.1"/>
    <property type="molecule type" value="Genomic_DNA"/>
</dbReference>
<dbReference type="SMR" id="Q4L795"/>
<dbReference type="KEGG" id="sha:SH1171"/>
<dbReference type="eggNOG" id="COG0624">
    <property type="taxonomic scope" value="Bacteria"/>
</dbReference>
<dbReference type="HOGENOM" id="CLU_031786_2_0_9"/>
<dbReference type="OrthoDB" id="9761532at2"/>
<dbReference type="Proteomes" id="UP000000543">
    <property type="component" value="Chromosome"/>
</dbReference>
<dbReference type="GO" id="GO:0008777">
    <property type="term" value="F:acetylornithine deacetylase activity"/>
    <property type="evidence" value="ECO:0007669"/>
    <property type="project" value="TreeGrafter"/>
</dbReference>
<dbReference type="GO" id="GO:0016805">
    <property type="term" value="F:dipeptidase activity"/>
    <property type="evidence" value="ECO:0007669"/>
    <property type="project" value="UniProtKB-KW"/>
</dbReference>
<dbReference type="GO" id="GO:0008237">
    <property type="term" value="F:metallopeptidase activity"/>
    <property type="evidence" value="ECO:0007669"/>
    <property type="project" value="UniProtKB-KW"/>
</dbReference>
<dbReference type="GO" id="GO:0008270">
    <property type="term" value="F:zinc ion binding"/>
    <property type="evidence" value="ECO:0007669"/>
    <property type="project" value="InterPro"/>
</dbReference>
<dbReference type="GO" id="GO:0006526">
    <property type="term" value="P:L-arginine biosynthetic process"/>
    <property type="evidence" value="ECO:0007669"/>
    <property type="project" value="TreeGrafter"/>
</dbReference>
<dbReference type="GO" id="GO:0006508">
    <property type="term" value="P:proteolysis"/>
    <property type="evidence" value="ECO:0007669"/>
    <property type="project" value="UniProtKB-KW"/>
</dbReference>
<dbReference type="CDD" id="cd03888">
    <property type="entry name" value="M20_PepV"/>
    <property type="match status" value="1"/>
</dbReference>
<dbReference type="Gene3D" id="3.30.70.360">
    <property type="match status" value="2"/>
</dbReference>
<dbReference type="Gene3D" id="3.40.630.10">
    <property type="entry name" value="Zn peptidases"/>
    <property type="match status" value="1"/>
</dbReference>
<dbReference type="InterPro" id="IPR036264">
    <property type="entry name" value="Bact_exopeptidase_dim_dom"/>
</dbReference>
<dbReference type="InterPro" id="IPR010964">
    <property type="entry name" value="M20A_pepV-rel"/>
</dbReference>
<dbReference type="InterPro" id="IPR002933">
    <property type="entry name" value="Peptidase_M20"/>
</dbReference>
<dbReference type="InterPro" id="IPR050072">
    <property type="entry name" value="Peptidase_M20A"/>
</dbReference>
<dbReference type="NCBIfam" id="TIGR01887">
    <property type="entry name" value="dipeptidaselike"/>
    <property type="match status" value="1"/>
</dbReference>
<dbReference type="NCBIfam" id="NF005591">
    <property type="entry name" value="PRK07318.1"/>
    <property type="match status" value="1"/>
</dbReference>
<dbReference type="PANTHER" id="PTHR43808">
    <property type="entry name" value="ACETYLORNITHINE DEACETYLASE"/>
    <property type="match status" value="1"/>
</dbReference>
<dbReference type="PANTHER" id="PTHR43808:SF31">
    <property type="entry name" value="N-ACETYL-L-CITRULLINE DEACETYLASE"/>
    <property type="match status" value="1"/>
</dbReference>
<dbReference type="Pfam" id="PF01546">
    <property type="entry name" value="Peptidase_M20"/>
    <property type="match status" value="1"/>
</dbReference>
<dbReference type="SUPFAM" id="SSF55031">
    <property type="entry name" value="Bacterial exopeptidase dimerisation domain"/>
    <property type="match status" value="1"/>
</dbReference>
<dbReference type="SUPFAM" id="SSF53187">
    <property type="entry name" value="Zn-dependent exopeptidases"/>
    <property type="match status" value="1"/>
</dbReference>
<reference key="1">
    <citation type="journal article" date="2005" name="J. Bacteriol.">
        <title>Whole-genome sequencing of Staphylococcus haemolyticus uncovers the extreme plasticity of its genome and the evolution of human-colonizing staphylococcal species.</title>
        <authorList>
            <person name="Takeuchi F."/>
            <person name="Watanabe S."/>
            <person name="Baba T."/>
            <person name="Yuzawa H."/>
            <person name="Ito T."/>
            <person name="Morimoto Y."/>
            <person name="Kuroda M."/>
            <person name="Cui L."/>
            <person name="Takahashi M."/>
            <person name="Ankai A."/>
            <person name="Baba S."/>
            <person name="Fukui S."/>
            <person name="Lee J.C."/>
            <person name="Hiramatsu K."/>
        </authorList>
    </citation>
    <scope>NUCLEOTIDE SEQUENCE [LARGE SCALE GENOMIC DNA]</scope>
    <source>
        <strain>JCSC1435</strain>
    </source>
</reference>
<evidence type="ECO:0000250" key="1"/>
<evidence type="ECO:0000305" key="2"/>
<feature type="chain" id="PRO_0000282636" description="Putative dipeptidase SH1171">
    <location>
        <begin position="1"/>
        <end position="469"/>
    </location>
</feature>
<feature type="active site" evidence="1">
    <location>
        <position position="86"/>
    </location>
</feature>
<feature type="active site" description="Proton acceptor" evidence="1">
    <location>
        <position position="149"/>
    </location>
</feature>
<feature type="binding site" evidence="1">
    <location>
        <position position="84"/>
    </location>
    <ligand>
        <name>Zn(2+)</name>
        <dbReference type="ChEBI" id="CHEBI:29105"/>
        <label>2</label>
    </ligand>
</feature>
<feature type="binding site" evidence="1">
    <location>
        <position position="115"/>
    </location>
    <ligand>
        <name>Zn(2+)</name>
        <dbReference type="ChEBI" id="CHEBI:29105"/>
        <label>1</label>
    </ligand>
</feature>
<feature type="binding site" evidence="1">
    <location>
        <position position="115"/>
    </location>
    <ligand>
        <name>Zn(2+)</name>
        <dbReference type="ChEBI" id="CHEBI:29105"/>
        <label>2</label>
    </ligand>
</feature>
<feature type="binding site" evidence="1">
    <location>
        <position position="150"/>
    </location>
    <ligand>
        <name>Zn(2+)</name>
        <dbReference type="ChEBI" id="CHEBI:29105"/>
        <label>1</label>
    </ligand>
</feature>
<feature type="binding site" evidence="1">
    <location>
        <position position="173"/>
    </location>
    <ligand>
        <name>Zn(2+)</name>
        <dbReference type="ChEBI" id="CHEBI:29105"/>
        <label>2</label>
    </ligand>
</feature>
<feature type="binding site" evidence="1">
    <location>
        <position position="440"/>
    </location>
    <ligand>
        <name>Zn(2+)</name>
        <dbReference type="ChEBI" id="CHEBI:29105"/>
        <label>1</label>
    </ligand>
</feature>
<keyword id="KW-0224">Dipeptidase</keyword>
<keyword id="KW-0378">Hydrolase</keyword>
<keyword id="KW-0479">Metal-binding</keyword>
<keyword id="KW-0482">Metalloprotease</keyword>
<keyword id="KW-0645">Protease</keyword>
<keyword id="KW-0862">Zinc</keyword>
<sequence length="469" mass="52904">MWKEKVQEYEGQIIDDLKGLLSIESVRDDSKASDETPVGPGPRQALDYMYEIAQRDGFSTHDVDHIAGRIEAGKGDDVLGVLCHVDVVPAGDGWDSDPFNPVVTDDAIIARGTLDDKGPTIAAYYAVKILNDMKVDWKKRIHIIIGTDEESDWKCTERYFQTEEMPTLGFAPDAEFPAIHGEKGITTFDLVQNSTSEDQDEPDYELISFESGQRYNMVPDHAQARVFVKENMTDVVQHFEHYLDQHKLQGESVVDSGELVLTLEGKAVHGMDPSLGVNAGLYLLDFISTLNLNQTAREFVDFSNRYLHESHFGEKMGMKFHTDVMGDVTTNVGIISYDNKQGGRFGINLRYPQKFEFEEAIQRFTKEIKAYGFDLELGKVQQPHFVDKNDPFVQKLVKAYRNQTGDMSEPYTIGGGTYARNLDKGVAFGAMFEDSEDLMHQKNEYITKKQLFNATSIYLEAIYSLCVEG</sequence>